<comment type="function">
    <text evidence="1">Catalyzes the interconversion of 2-phosphoglycerate and 3-phosphoglycerate.</text>
</comment>
<comment type="catalytic activity">
    <reaction evidence="1">
        <text>(2R)-2-phosphoglycerate = (2R)-3-phosphoglycerate</text>
        <dbReference type="Rhea" id="RHEA:15901"/>
        <dbReference type="ChEBI" id="CHEBI:58272"/>
        <dbReference type="ChEBI" id="CHEBI:58289"/>
        <dbReference type="EC" id="5.4.2.11"/>
    </reaction>
</comment>
<comment type="pathway">
    <text evidence="1">Carbohydrate degradation; glycolysis; pyruvate from D-glyceraldehyde 3-phosphate: step 3/5.</text>
</comment>
<comment type="similarity">
    <text evidence="1">Belongs to the phosphoglycerate mutase family. BPG-dependent PGAM subfamily.</text>
</comment>
<accession>B1I720</accession>
<gene>
    <name evidence="1" type="primary">gpmA</name>
    <name type="ordered locus">SPH_1765</name>
</gene>
<reference key="1">
    <citation type="journal article" date="2010" name="Genome Biol.">
        <title>Structure and dynamics of the pan-genome of Streptococcus pneumoniae and closely related species.</title>
        <authorList>
            <person name="Donati C."/>
            <person name="Hiller N.L."/>
            <person name="Tettelin H."/>
            <person name="Muzzi A."/>
            <person name="Croucher N.J."/>
            <person name="Angiuoli S.V."/>
            <person name="Oggioni M."/>
            <person name="Dunning Hotopp J.C."/>
            <person name="Hu F.Z."/>
            <person name="Riley D.R."/>
            <person name="Covacci A."/>
            <person name="Mitchell T.J."/>
            <person name="Bentley S.D."/>
            <person name="Kilian M."/>
            <person name="Ehrlich G.D."/>
            <person name="Rappuoli R."/>
            <person name="Moxon E.R."/>
            <person name="Masignani V."/>
        </authorList>
    </citation>
    <scope>NUCLEOTIDE SEQUENCE [LARGE SCALE GENOMIC DNA]</scope>
    <source>
        <strain>Hungary19A-6</strain>
    </source>
</reference>
<feature type="chain" id="PRO_1000135984" description="2,3-bisphosphoglycerate-dependent phosphoglycerate mutase">
    <location>
        <begin position="1"/>
        <end position="230"/>
    </location>
</feature>
<feature type="active site" description="Tele-phosphohistidine intermediate" evidence="1">
    <location>
        <position position="9"/>
    </location>
</feature>
<feature type="active site" description="Proton donor/acceptor" evidence="1">
    <location>
        <position position="87"/>
    </location>
</feature>
<feature type="binding site" evidence="1">
    <location>
        <begin position="8"/>
        <end position="15"/>
    </location>
    <ligand>
        <name>substrate</name>
    </ligand>
</feature>
<feature type="binding site" evidence="1">
    <location>
        <begin position="21"/>
        <end position="22"/>
    </location>
    <ligand>
        <name>substrate</name>
    </ligand>
</feature>
<feature type="binding site" evidence="1">
    <location>
        <position position="60"/>
    </location>
    <ligand>
        <name>substrate</name>
    </ligand>
</feature>
<feature type="binding site" evidence="1">
    <location>
        <begin position="87"/>
        <end position="90"/>
    </location>
    <ligand>
        <name>substrate</name>
    </ligand>
</feature>
<feature type="binding site" evidence="1">
    <location>
        <position position="98"/>
    </location>
    <ligand>
        <name>substrate</name>
    </ligand>
</feature>
<feature type="binding site" evidence="1">
    <location>
        <begin position="114"/>
        <end position="115"/>
    </location>
    <ligand>
        <name>substrate</name>
    </ligand>
</feature>
<feature type="binding site" evidence="1">
    <location>
        <begin position="183"/>
        <end position="184"/>
    </location>
    <ligand>
        <name>substrate</name>
    </ligand>
</feature>
<feature type="site" description="Transition state stabilizer" evidence="1">
    <location>
        <position position="182"/>
    </location>
</feature>
<dbReference type="EC" id="5.4.2.11" evidence="1"/>
<dbReference type="EMBL" id="CP000936">
    <property type="protein sequence ID" value="ACA36744.1"/>
    <property type="molecule type" value="Genomic_DNA"/>
</dbReference>
<dbReference type="RefSeq" id="WP_000240129.1">
    <property type="nucleotide sequence ID" value="NC_010380.1"/>
</dbReference>
<dbReference type="SMR" id="B1I720"/>
<dbReference type="KEGG" id="spv:SPH_1765"/>
<dbReference type="HOGENOM" id="CLU_033323_1_5_9"/>
<dbReference type="UniPathway" id="UPA00109">
    <property type="reaction ID" value="UER00186"/>
</dbReference>
<dbReference type="Proteomes" id="UP000002163">
    <property type="component" value="Chromosome"/>
</dbReference>
<dbReference type="GO" id="GO:0004619">
    <property type="term" value="F:phosphoglycerate mutase activity"/>
    <property type="evidence" value="ECO:0007669"/>
    <property type="project" value="UniProtKB-EC"/>
</dbReference>
<dbReference type="GO" id="GO:0006094">
    <property type="term" value="P:gluconeogenesis"/>
    <property type="evidence" value="ECO:0007669"/>
    <property type="project" value="UniProtKB-UniRule"/>
</dbReference>
<dbReference type="GO" id="GO:0006096">
    <property type="term" value="P:glycolytic process"/>
    <property type="evidence" value="ECO:0007669"/>
    <property type="project" value="UniProtKB-UniRule"/>
</dbReference>
<dbReference type="CDD" id="cd07067">
    <property type="entry name" value="HP_PGM_like"/>
    <property type="match status" value="1"/>
</dbReference>
<dbReference type="FunFam" id="3.40.50.1240:FF:000003">
    <property type="entry name" value="2,3-bisphosphoglycerate-dependent phosphoglycerate mutase"/>
    <property type="match status" value="1"/>
</dbReference>
<dbReference type="Gene3D" id="3.40.50.1240">
    <property type="entry name" value="Phosphoglycerate mutase-like"/>
    <property type="match status" value="1"/>
</dbReference>
<dbReference type="HAMAP" id="MF_01039">
    <property type="entry name" value="PGAM_GpmA"/>
    <property type="match status" value="1"/>
</dbReference>
<dbReference type="InterPro" id="IPR013078">
    <property type="entry name" value="His_Pase_superF_clade-1"/>
</dbReference>
<dbReference type="InterPro" id="IPR029033">
    <property type="entry name" value="His_PPase_superfam"/>
</dbReference>
<dbReference type="InterPro" id="IPR005952">
    <property type="entry name" value="Phosphogly_mut1"/>
</dbReference>
<dbReference type="NCBIfam" id="TIGR01258">
    <property type="entry name" value="pgm_1"/>
    <property type="match status" value="1"/>
</dbReference>
<dbReference type="NCBIfam" id="NF010713">
    <property type="entry name" value="PRK14115.1"/>
    <property type="match status" value="1"/>
</dbReference>
<dbReference type="NCBIfam" id="NF010715">
    <property type="entry name" value="PRK14117.1"/>
    <property type="match status" value="1"/>
</dbReference>
<dbReference type="PANTHER" id="PTHR11931">
    <property type="entry name" value="PHOSPHOGLYCERATE MUTASE"/>
    <property type="match status" value="1"/>
</dbReference>
<dbReference type="Pfam" id="PF00300">
    <property type="entry name" value="His_Phos_1"/>
    <property type="match status" value="1"/>
</dbReference>
<dbReference type="PIRSF" id="PIRSF000709">
    <property type="entry name" value="6PFK_2-Ptase"/>
    <property type="match status" value="1"/>
</dbReference>
<dbReference type="SMART" id="SM00855">
    <property type="entry name" value="PGAM"/>
    <property type="match status" value="1"/>
</dbReference>
<dbReference type="SUPFAM" id="SSF53254">
    <property type="entry name" value="Phosphoglycerate mutase-like"/>
    <property type="match status" value="1"/>
</dbReference>
<proteinExistence type="inferred from homology"/>
<organism>
    <name type="scientific">Streptococcus pneumoniae (strain Hungary19A-6)</name>
    <dbReference type="NCBI Taxonomy" id="487214"/>
    <lineage>
        <taxon>Bacteria</taxon>
        <taxon>Bacillati</taxon>
        <taxon>Bacillota</taxon>
        <taxon>Bacilli</taxon>
        <taxon>Lactobacillales</taxon>
        <taxon>Streptococcaceae</taxon>
        <taxon>Streptococcus</taxon>
    </lineage>
</organism>
<sequence>MVKLVFARHGESEWNKANLFTGWADVDLSEKGTQQAIDAGKLIKEAGIEFDQAYTSVLKRAIKTTNLALEASDQLWVPVEKSWRLNERHYGGLTGKNKAEAAEQFGDEQVHIWRRSYDVLPPNMDRDDEHSAHTDRRYASLDDSVIPDAENLKVTLERALPFWEDKIAPALKDGKNVFVGAHGNSIRALVKHIKGLSDDEIMDVEIPNFPPLVFEFDEKLNVVSEYYLGK</sequence>
<protein>
    <recommendedName>
        <fullName evidence="1">2,3-bisphosphoglycerate-dependent phosphoglycerate mutase</fullName>
        <shortName evidence="1">BPG-dependent PGAM</shortName>
        <shortName evidence="1">PGAM</shortName>
        <shortName evidence="1">Phosphoglyceromutase</shortName>
        <shortName evidence="1">dPGM</shortName>
        <ecNumber evidence="1">5.4.2.11</ecNumber>
    </recommendedName>
</protein>
<name>GPMA_STRPI</name>
<keyword id="KW-0312">Gluconeogenesis</keyword>
<keyword id="KW-0324">Glycolysis</keyword>
<keyword id="KW-0413">Isomerase</keyword>
<evidence type="ECO:0000255" key="1">
    <source>
        <dbReference type="HAMAP-Rule" id="MF_01039"/>
    </source>
</evidence>